<proteinExistence type="inferred from homology"/>
<reference key="1">
    <citation type="journal article" date="2010" name="PLoS ONE">
        <title>The complete genome sequence of Cupriavidus metallidurans strain CH34, a master survivalist in harsh and anthropogenic environments.</title>
        <authorList>
            <person name="Janssen P.J."/>
            <person name="Van Houdt R."/>
            <person name="Moors H."/>
            <person name="Monsieurs P."/>
            <person name="Morin N."/>
            <person name="Michaux A."/>
            <person name="Benotmane M.A."/>
            <person name="Leys N."/>
            <person name="Vallaeys T."/>
            <person name="Lapidus A."/>
            <person name="Monchy S."/>
            <person name="Medigue C."/>
            <person name="Taghavi S."/>
            <person name="McCorkle S."/>
            <person name="Dunn J."/>
            <person name="van der Lelie D."/>
            <person name="Mergeay M."/>
        </authorList>
    </citation>
    <scope>NUCLEOTIDE SEQUENCE [LARGE SCALE GENOMIC DNA]</scope>
    <source>
        <strain>ATCC 43123 / DSM 2839 / NBRC 102507 / CH34</strain>
    </source>
</reference>
<comment type="function">
    <text evidence="1">Is required not only for elongation of protein synthesis but also for the initiation of all mRNA translation through initiator tRNA(fMet) aminoacylation.</text>
</comment>
<comment type="catalytic activity">
    <reaction evidence="1">
        <text>tRNA(Met) + L-methionine + ATP = L-methionyl-tRNA(Met) + AMP + diphosphate</text>
        <dbReference type="Rhea" id="RHEA:13481"/>
        <dbReference type="Rhea" id="RHEA-COMP:9667"/>
        <dbReference type="Rhea" id="RHEA-COMP:9698"/>
        <dbReference type="ChEBI" id="CHEBI:30616"/>
        <dbReference type="ChEBI" id="CHEBI:33019"/>
        <dbReference type="ChEBI" id="CHEBI:57844"/>
        <dbReference type="ChEBI" id="CHEBI:78442"/>
        <dbReference type="ChEBI" id="CHEBI:78530"/>
        <dbReference type="ChEBI" id="CHEBI:456215"/>
        <dbReference type="EC" id="6.1.1.10"/>
    </reaction>
</comment>
<comment type="cofactor">
    <cofactor evidence="1">
        <name>Zn(2+)</name>
        <dbReference type="ChEBI" id="CHEBI:29105"/>
    </cofactor>
    <text evidence="1">Binds 1 zinc ion per subunit.</text>
</comment>
<comment type="subunit">
    <text evidence="1">Homodimer.</text>
</comment>
<comment type="subcellular location">
    <subcellularLocation>
        <location evidence="1">Cytoplasm</location>
    </subcellularLocation>
</comment>
<comment type="similarity">
    <text evidence="1">Belongs to the class-I aminoacyl-tRNA synthetase family. MetG type 1 subfamily.</text>
</comment>
<sequence>MTARRILVTSALPYANGQIHIGHLVEYIQTDIWVRFQRMMGNEVYYVGADDTHGTPVMLRAEKEGITPKQLIDRVWTEHKRDFDNFLVSFDNYYSTDAEENRQLCEKIYLALKAEDLITERDVEQFYDPVKNMFLPDRFIKGECPKCGAKDQYGDSCEVCGTTYVPTDLKNPYSVVSGATPVRKSSTHFFFKLSDPRCETFLREWVADLAQPEASNKMQEWLGAEGEASTLSDWDISRDAPYFGFEIPGAPGKYFYVWLDAPIGYYASFKNLAEKRGIDFDAWVGPHSTAEQYHFIGKDILYFHTLFWPAMLRFSGYRTPTNVFAHGFLTVDGAKMSKSRGTFITAQSYTDTGMNPEWLRYYFAAKLNASMEDLDLNLDDFVARVNSDLIGKYVNIASRAAGFLVKRFDGKVNEAALANPLLEQLRQAAPQLAQYYEGREYSKALRLVMELTDAVNAFVDTNKPWELAKDESKRDALHAACSVSLEAFRLLTIYLKPVVPTMAAGVERFLNVDPLDWRAIDKQLSADRPVQPYQHLMTRVDVKQIDALLAANRDSLQAAAPAAEAGAAGASAIEPVADTITIDDFAKIDLRVAKIVACDKVEGSNKLLQLTLDLGEGKTRNVFSGIQSAYTPEQLVGKLTVVVANLAPRKMKFGMSEGMVLAASAADEKANPGLYILEPHSGAVPGMRIR</sequence>
<keyword id="KW-0030">Aminoacyl-tRNA synthetase</keyword>
<keyword id="KW-0067">ATP-binding</keyword>
<keyword id="KW-0963">Cytoplasm</keyword>
<keyword id="KW-0436">Ligase</keyword>
<keyword id="KW-0479">Metal-binding</keyword>
<keyword id="KW-0547">Nucleotide-binding</keyword>
<keyword id="KW-0648">Protein biosynthesis</keyword>
<keyword id="KW-1185">Reference proteome</keyword>
<keyword id="KW-0694">RNA-binding</keyword>
<keyword id="KW-0820">tRNA-binding</keyword>
<keyword id="KW-0862">Zinc</keyword>
<gene>
    <name evidence="1" type="primary">metG</name>
    <name type="ordered locus">Rmet_2769</name>
</gene>
<dbReference type="EC" id="6.1.1.10" evidence="1"/>
<dbReference type="EMBL" id="CP000352">
    <property type="protein sequence ID" value="ABF09642.1"/>
    <property type="molecule type" value="Genomic_DNA"/>
</dbReference>
<dbReference type="RefSeq" id="WP_011517339.1">
    <property type="nucleotide sequence ID" value="NC_007973.1"/>
</dbReference>
<dbReference type="SMR" id="Q1LJN4"/>
<dbReference type="STRING" id="266264.Rmet_2769"/>
<dbReference type="KEGG" id="rme:Rmet_2769"/>
<dbReference type="eggNOG" id="COG0073">
    <property type="taxonomic scope" value="Bacteria"/>
</dbReference>
<dbReference type="eggNOG" id="COG0143">
    <property type="taxonomic scope" value="Bacteria"/>
</dbReference>
<dbReference type="HOGENOM" id="CLU_009710_7_0_4"/>
<dbReference type="Proteomes" id="UP000002429">
    <property type="component" value="Chromosome"/>
</dbReference>
<dbReference type="GO" id="GO:0005829">
    <property type="term" value="C:cytosol"/>
    <property type="evidence" value="ECO:0007669"/>
    <property type="project" value="TreeGrafter"/>
</dbReference>
<dbReference type="GO" id="GO:0005524">
    <property type="term" value="F:ATP binding"/>
    <property type="evidence" value="ECO:0007669"/>
    <property type="project" value="UniProtKB-UniRule"/>
</dbReference>
<dbReference type="GO" id="GO:0046872">
    <property type="term" value="F:metal ion binding"/>
    <property type="evidence" value="ECO:0007669"/>
    <property type="project" value="UniProtKB-KW"/>
</dbReference>
<dbReference type="GO" id="GO:0004825">
    <property type="term" value="F:methionine-tRNA ligase activity"/>
    <property type="evidence" value="ECO:0007669"/>
    <property type="project" value="UniProtKB-UniRule"/>
</dbReference>
<dbReference type="GO" id="GO:0000049">
    <property type="term" value="F:tRNA binding"/>
    <property type="evidence" value="ECO:0007669"/>
    <property type="project" value="UniProtKB-KW"/>
</dbReference>
<dbReference type="GO" id="GO:0006431">
    <property type="term" value="P:methionyl-tRNA aminoacylation"/>
    <property type="evidence" value="ECO:0007669"/>
    <property type="project" value="UniProtKB-UniRule"/>
</dbReference>
<dbReference type="CDD" id="cd07957">
    <property type="entry name" value="Anticodon_Ia_Met"/>
    <property type="match status" value="1"/>
</dbReference>
<dbReference type="CDD" id="cd00814">
    <property type="entry name" value="MetRS_core"/>
    <property type="match status" value="1"/>
</dbReference>
<dbReference type="CDD" id="cd02800">
    <property type="entry name" value="tRNA_bind_EcMetRS_like"/>
    <property type="match status" value="1"/>
</dbReference>
<dbReference type="FunFam" id="2.20.28.20:FF:000001">
    <property type="entry name" value="Methionine--tRNA ligase"/>
    <property type="match status" value="1"/>
</dbReference>
<dbReference type="FunFam" id="2.40.50.140:FF:000042">
    <property type="entry name" value="Methionine--tRNA ligase"/>
    <property type="match status" value="1"/>
</dbReference>
<dbReference type="Gene3D" id="3.40.50.620">
    <property type="entry name" value="HUPs"/>
    <property type="match status" value="1"/>
</dbReference>
<dbReference type="Gene3D" id="1.10.730.10">
    <property type="entry name" value="Isoleucyl-tRNA Synthetase, Domain 1"/>
    <property type="match status" value="1"/>
</dbReference>
<dbReference type="Gene3D" id="2.20.28.20">
    <property type="entry name" value="Methionyl-tRNA synthetase, Zn-domain"/>
    <property type="match status" value="1"/>
</dbReference>
<dbReference type="Gene3D" id="2.40.50.140">
    <property type="entry name" value="Nucleic acid-binding proteins"/>
    <property type="match status" value="1"/>
</dbReference>
<dbReference type="HAMAP" id="MF_00098">
    <property type="entry name" value="Met_tRNA_synth_type1"/>
    <property type="match status" value="1"/>
</dbReference>
<dbReference type="InterPro" id="IPR001412">
    <property type="entry name" value="aa-tRNA-synth_I_CS"/>
</dbReference>
<dbReference type="InterPro" id="IPR041872">
    <property type="entry name" value="Anticodon_Met"/>
</dbReference>
<dbReference type="InterPro" id="IPR004495">
    <property type="entry name" value="Met-tRNA-synth_bsu_C"/>
</dbReference>
<dbReference type="InterPro" id="IPR023458">
    <property type="entry name" value="Met-tRNA_ligase_1"/>
</dbReference>
<dbReference type="InterPro" id="IPR014758">
    <property type="entry name" value="Met-tRNA_synth"/>
</dbReference>
<dbReference type="InterPro" id="IPR015413">
    <property type="entry name" value="Methionyl/Leucyl_tRNA_Synth"/>
</dbReference>
<dbReference type="InterPro" id="IPR033911">
    <property type="entry name" value="MetRS_core"/>
</dbReference>
<dbReference type="InterPro" id="IPR029038">
    <property type="entry name" value="MetRS_Zn"/>
</dbReference>
<dbReference type="InterPro" id="IPR012340">
    <property type="entry name" value="NA-bd_OB-fold"/>
</dbReference>
<dbReference type="InterPro" id="IPR014729">
    <property type="entry name" value="Rossmann-like_a/b/a_fold"/>
</dbReference>
<dbReference type="InterPro" id="IPR002547">
    <property type="entry name" value="tRNA-bd_dom"/>
</dbReference>
<dbReference type="InterPro" id="IPR009080">
    <property type="entry name" value="tRNAsynth_Ia_anticodon-bd"/>
</dbReference>
<dbReference type="NCBIfam" id="TIGR00398">
    <property type="entry name" value="metG"/>
    <property type="match status" value="1"/>
</dbReference>
<dbReference type="NCBIfam" id="TIGR00399">
    <property type="entry name" value="metG_C_term"/>
    <property type="match status" value="1"/>
</dbReference>
<dbReference type="NCBIfam" id="NF001100">
    <property type="entry name" value="PRK00133.1"/>
    <property type="match status" value="1"/>
</dbReference>
<dbReference type="PANTHER" id="PTHR45765">
    <property type="entry name" value="METHIONINE--TRNA LIGASE"/>
    <property type="match status" value="1"/>
</dbReference>
<dbReference type="PANTHER" id="PTHR45765:SF1">
    <property type="entry name" value="METHIONINE--TRNA LIGASE, CYTOPLASMIC"/>
    <property type="match status" value="1"/>
</dbReference>
<dbReference type="Pfam" id="PF19303">
    <property type="entry name" value="Anticodon_3"/>
    <property type="match status" value="1"/>
</dbReference>
<dbReference type="Pfam" id="PF09334">
    <property type="entry name" value="tRNA-synt_1g"/>
    <property type="match status" value="1"/>
</dbReference>
<dbReference type="Pfam" id="PF01588">
    <property type="entry name" value="tRNA_bind"/>
    <property type="match status" value="1"/>
</dbReference>
<dbReference type="PRINTS" id="PR01041">
    <property type="entry name" value="TRNASYNTHMET"/>
</dbReference>
<dbReference type="SUPFAM" id="SSF47323">
    <property type="entry name" value="Anticodon-binding domain of a subclass of class I aminoacyl-tRNA synthetases"/>
    <property type="match status" value="1"/>
</dbReference>
<dbReference type="SUPFAM" id="SSF57770">
    <property type="entry name" value="Methionyl-tRNA synthetase (MetRS), Zn-domain"/>
    <property type="match status" value="1"/>
</dbReference>
<dbReference type="SUPFAM" id="SSF50249">
    <property type="entry name" value="Nucleic acid-binding proteins"/>
    <property type="match status" value="1"/>
</dbReference>
<dbReference type="SUPFAM" id="SSF52374">
    <property type="entry name" value="Nucleotidylyl transferase"/>
    <property type="match status" value="1"/>
</dbReference>
<dbReference type="PROSITE" id="PS00178">
    <property type="entry name" value="AA_TRNA_LIGASE_I"/>
    <property type="match status" value="1"/>
</dbReference>
<dbReference type="PROSITE" id="PS50886">
    <property type="entry name" value="TRBD"/>
    <property type="match status" value="1"/>
</dbReference>
<name>SYM_CUPMC</name>
<accession>Q1LJN4</accession>
<evidence type="ECO:0000255" key="1">
    <source>
        <dbReference type="HAMAP-Rule" id="MF_00098"/>
    </source>
</evidence>
<organism>
    <name type="scientific">Cupriavidus metallidurans (strain ATCC 43123 / DSM 2839 / NBRC 102507 / CH34)</name>
    <name type="common">Ralstonia metallidurans</name>
    <dbReference type="NCBI Taxonomy" id="266264"/>
    <lineage>
        <taxon>Bacteria</taxon>
        <taxon>Pseudomonadati</taxon>
        <taxon>Pseudomonadota</taxon>
        <taxon>Betaproteobacteria</taxon>
        <taxon>Burkholderiales</taxon>
        <taxon>Burkholderiaceae</taxon>
        <taxon>Cupriavidus</taxon>
    </lineage>
</organism>
<protein>
    <recommendedName>
        <fullName evidence="1">Methionine--tRNA ligase</fullName>
        <ecNumber evidence="1">6.1.1.10</ecNumber>
    </recommendedName>
    <alternativeName>
        <fullName evidence="1">Methionyl-tRNA synthetase</fullName>
        <shortName evidence="1">MetRS</shortName>
    </alternativeName>
</protein>
<feature type="chain" id="PRO_0000331884" description="Methionine--tRNA ligase">
    <location>
        <begin position="1"/>
        <end position="690"/>
    </location>
</feature>
<feature type="domain" description="tRNA-binding" evidence="1">
    <location>
        <begin position="584"/>
        <end position="690"/>
    </location>
</feature>
<feature type="short sequence motif" description="'HIGH' region">
    <location>
        <begin position="13"/>
        <end position="23"/>
    </location>
</feature>
<feature type="short sequence motif" description="'KMSKS' region">
    <location>
        <begin position="335"/>
        <end position="339"/>
    </location>
</feature>
<feature type="binding site" evidence="1">
    <location>
        <position position="144"/>
    </location>
    <ligand>
        <name>Zn(2+)</name>
        <dbReference type="ChEBI" id="CHEBI:29105"/>
    </ligand>
</feature>
<feature type="binding site" evidence="1">
    <location>
        <position position="147"/>
    </location>
    <ligand>
        <name>Zn(2+)</name>
        <dbReference type="ChEBI" id="CHEBI:29105"/>
    </ligand>
</feature>
<feature type="binding site" evidence="1">
    <location>
        <position position="157"/>
    </location>
    <ligand>
        <name>Zn(2+)</name>
        <dbReference type="ChEBI" id="CHEBI:29105"/>
    </ligand>
</feature>
<feature type="binding site" evidence="1">
    <location>
        <position position="160"/>
    </location>
    <ligand>
        <name>Zn(2+)</name>
        <dbReference type="ChEBI" id="CHEBI:29105"/>
    </ligand>
</feature>
<feature type="binding site" evidence="1">
    <location>
        <position position="338"/>
    </location>
    <ligand>
        <name>ATP</name>
        <dbReference type="ChEBI" id="CHEBI:30616"/>
    </ligand>
</feature>